<gene>
    <name type="primary">hrtA</name>
    <name type="ordered locus">SE_1939</name>
</gene>
<sequence length="222" mass="24544">MGLVVKDISKTFGEKSSKTEVLKDINFEVKDGEFIILNGASGSGKTTLLTILGGLLSQTSGDVVYEGKSLFERHTNKAHLRLNDIGFIFQASHLVPYLKVLDQLTLIGKEAGMSSKEAQARAKELLTKIGLEEQLNSYPHMLSGGQQQRVAIMRALMNHPKIVLADEPTASLDASRAQEVVEMIRKQIKANQMIGIMITHDESLFKYADRIVQLYDGKIKNS</sequence>
<proteinExistence type="inferred from homology"/>
<comment type="function">
    <text evidence="1">Part of the ABC transporter complex hrt involved in hemin import. Responsible for energy coupling to the transport system (By similarity).</text>
</comment>
<comment type="subunit">
    <text evidence="1">The complex is composed of two ATP-binding proteins (HrtA), two transmembrane proteins (HrtB) and a solute-binding protein.</text>
</comment>
<comment type="subcellular location">
    <subcellularLocation>
        <location evidence="3">Cell membrane</location>
        <topology evidence="3">Peripheral membrane protein</topology>
    </subcellularLocation>
</comment>
<comment type="similarity">
    <text evidence="3">Belongs to the ABC transporter superfamily. HrtA family.</text>
</comment>
<reference key="1">
    <citation type="journal article" date="2003" name="Mol. Microbiol.">
        <title>Genome-based analysis of virulence genes in a non-biofilm-forming Staphylococcus epidermidis strain (ATCC 12228).</title>
        <authorList>
            <person name="Zhang Y.-Q."/>
            <person name="Ren S.-X."/>
            <person name="Li H.-L."/>
            <person name="Wang Y.-X."/>
            <person name="Fu G."/>
            <person name="Yang J."/>
            <person name="Qin Z.-Q."/>
            <person name="Miao Y.-G."/>
            <person name="Wang W.-Y."/>
            <person name="Chen R.-S."/>
            <person name="Shen Y."/>
            <person name="Chen Z."/>
            <person name="Yuan Z.-H."/>
            <person name="Zhao G.-P."/>
            <person name="Qu D."/>
            <person name="Danchin A."/>
            <person name="Wen Y.-M."/>
        </authorList>
    </citation>
    <scope>NUCLEOTIDE SEQUENCE [LARGE SCALE GENOMIC DNA]</scope>
    <source>
        <strain>ATCC 12228 / FDA PCI 1200</strain>
    </source>
</reference>
<feature type="chain" id="PRO_0000270137" description="Putative hemin import ATP-binding protein HrtA">
    <location>
        <begin position="1"/>
        <end position="222"/>
    </location>
</feature>
<feature type="domain" description="ABC transporter" evidence="2">
    <location>
        <begin position="3"/>
        <end position="222"/>
    </location>
</feature>
<feature type="binding site" evidence="2">
    <location>
        <begin position="39"/>
        <end position="46"/>
    </location>
    <ligand>
        <name>ATP</name>
        <dbReference type="ChEBI" id="CHEBI:30616"/>
    </ligand>
</feature>
<organism>
    <name type="scientific">Staphylococcus epidermidis (strain ATCC 12228 / FDA PCI 1200)</name>
    <dbReference type="NCBI Taxonomy" id="176280"/>
    <lineage>
        <taxon>Bacteria</taxon>
        <taxon>Bacillati</taxon>
        <taxon>Bacillota</taxon>
        <taxon>Bacilli</taxon>
        <taxon>Bacillales</taxon>
        <taxon>Staphylococcaceae</taxon>
        <taxon>Staphylococcus</taxon>
    </lineage>
</organism>
<dbReference type="EC" id="7.6.2.-"/>
<dbReference type="EMBL" id="AE015929">
    <property type="protein sequence ID" value="AAO05580.1"/>
    <property type="molecule type" value="Genomic_DNA"/>
</dbReference>
<dbReference type="RefSeq" id="NP_765494.1">
    <property type="nucleotide sequence ID" value="NC_004461.1"/>
</dbReference>
<dbReference type="RefSeq" id="WP_002468227.1">
    <property type="nucleotide sequence ID" value="NZ_WBME01000017.1"/>
</dbReference>
<dbReference type="SMR" id="Q8CRB0"/>
<dbReference type="KEGG" id="sep:SE_1939"/>
<dbReference type="PATRIC" id="fig|176280.10.peg.1892"/>
<dbReference type="eggNOG" id="COG1136">
    <property type="taxonomic scope" value="Bacteria"/>
</dbReference>
<dbReference type="HOGENOM" id="CLU_000604_1_22_9"/>
<dbReference type="OrthoDB" id="9791546at2"/>
<dbReference type="Proteomes" id="UP000001411">
    <property type="component" value="Chromosome"/>
</dbReference>
<dbReference type="GO" id="GO:0005886">
    <property type="term" value="C:plasma membrane"/>
    <property type="evidence" value="ECO:0007669"/>
    <property type="project" value="UniProtKB-SubCell"/>
</dbReference>
<dbReference type="GO" id="GO:0005524">
    <property type="term" value="F:ATP binding"/>
    <property type="evidence" value="ECO:0007669"/>
    <property type="project" value="UniProtKB-KW"/>
</dbReference>
<dbReference type="GO" id="GO:0016887">
    <property type="term" value="F:ATP hydrolysis activity"/>
    <property type="evidence" value="ECO:0007669"/>
    <property type="project" value="InterPro"/>
</dbReference>
<dbReference type="GO" id="GO:0022857">
    <property type="term" value="F:transmembrane transporter activity"/>
    <property type="evidence" value="ECO:0007669"/>
    <property type="project" value="TreeGrafter"/>
</dbReference>
<dbReference type="CDD" id="cd03255">
    <property type="entry name" value="ABC_MJ0796_LolCDE_FtsE"/>
    <property type="match status" value="1"/>
</dbReference>
<dbReference type="FunFam" id="3.40.50.300:FF:000032">
    <property type="entry name" value="Export ABC transporter ATP-binding protein"/>
    <property type="match status" value="1"/>
</dbReference>
<dbReference type="Gene3D" id="3.40.50.300">
    <property type="entry name" value="P-loop containing nucleotide triphosphate hydrolases"/>
    <property type="match status" value="1"/>
</dbReference>
<dbReference type="InterPro" id="IPR003593">
    <property type="entry name" value="AAA+_ATPase"/>
</dbReference>
<dbReference type="InterPro" id="IPR003439">
    <property type="entry name" value="ABC_transporter-like_ATP-bd"/>
</dbReference>
<dbReference type="InterPro" id="IPR015854">
    <property type="entry name" value="ABC_transpr_LolD-like"/>
</dbReference>
<dbReference type="InterPro" id="IPR017911">
    <property type="entry name" value="MacB-like_ATP-bd"/>
</dbReference>
<dbReference type="InterPro" id="IPR027417">
    <property type="entry name" value="P-loop_NTPase"/>
</dbReference>
<dbReference type="PANTHER" id="PTHR24220:SF666">
    <property type="entry name" value="HEMIN IMPORT ATP-BINDING PROTEIN HRTA-RELATED"/>
    <property type="match status" value="1"/>
</dbReference>
<dbReference type="PANTHER" id="PTHR24220">
    <property type="entry name" value="IMPORT ATP-BINDING PROTEIN"/>
    <property type="match status" value="1"/>
</dbReference>
<dbReference type="Pfam" id="PF00005">
    <property type="entry name" value="ABC_tran"/>
    <property type="match status" value="1"/>
</dbReference>
<dbReference type="SMART" id="SM00382">
    <property type="entry name" value="AAA"/>
    <property type="match status" value="1"/>
</dbReference>
<dbReference type="SUPFAM" id="SSF52540">
    <property type="entry name" value="P-loop containing nucleoside triphosphate hydrolases"/>
    <property type="match status" value="1"/>
</dbReference>
<dbReference type="PROSITE" id="PS50893">
    <property type="entry name" value="ABC_TRANSPORTER_2"/>
    <property type="match status" value="1"/>
</dbReference>
<evidence type="ECO:0000250" key="1"/>
<evidence type="ECO:0000255" key="2">
    <source>
        <dbReference type="PROSITE-ProRule" id="PRU00434"/>
    </source>
</evidence>
<evidence type="ECO:0000305" key="3"/>
<name>HRTA_STAES</name>
<keyword id="KW-0067">ATP-binding</keyword>
<keyword id="KW-1003">Cell membrane</keyword>
<keyword id="KW-0472">Membrane</keyword>
<keyword id="KW-0547">Nucleotide-binding</keyword>
<keyword id="KW-1278">Translocase</keyword>
<keyword id="KW-0813">Transport</keyword>
<protein>
    <recommendedName>
        <fullName>Putative hemin import ATP-binding protein HrtA</fullName>
        <ecNumber>7.6.2.-</ecNumber>
    </recommendedName>
</protein>
<accession>Q8CRB0</accession>